<keyword id="KW-0066">ATP synthesis</keyword>
<keyword id="KW-0997">Cell inner membrane</keyword>
<keyword id="KW-1003">Cell membrane</keyword>
<keyword id="KW-0139">CF(1)</keyword>
<keyword id="KW-0375">Hydrogen ion transport</keyword>
<keyword id="KW-0406">Ion transport</keyword>
<keyword id="KW-0472">Membrane</keyword>
<keyword id="KW-1185">Reference proteome</keyword>
<keyword id="KW-0813">Transport</keyword>
<sequence>MISNAIARRYAKALVQLGAEEDAVDRFGAELGQFAALLEGNADIDSVLKSPAYRIEAKREILKDVLAKLSLSGTVSNFLQVLLDRGRISFLPQIAHSYAAFADELSGVIRPVLTSAFPLEDAQVESMKGALVKATGKKVQLSVQVEPSLIGGVITKIGDKVFDGSVRTQLNRIQDILQKG</sequence>
<organism>
    <name type="scientific">Geobacter metallireducens (strain ATCC 53774 / DSM 7210 / GS-15)</name>
    <dbReference type="NCBI Taxonomy" id="269799"/>
    <lineage>
        <taxon>Bacteria</taxon>
        <taxon>Pseudomonadati</taxon>
        <taxon>Thermodesulfobacteriota</taxon>
        <taxon>Desulfuromonadia</taxon>
        <taxon>Geobacterales</taxon>
        <taxon>Geobacteraceae</taxon>
        <taxon>Geobacter</taxon>
    </lineage>
</organism>
<comment type="function">
    <text evidence="1">F(1)F(0) ATP synthase produces ATP from ADP in the presence of a proton or sodium gradient. F-type ATPases consist of two structural domains, F(1) containing the extramembraneous catalytic core and F(0) containing the membrane proton channel, linked together by a central stalk and a peripheral stalk. During catalysis, ATP synthesis in the catalytic domain of F(1) is coupled via a rotary mechanism of the central stalk subunits to proton translocation.</text>
</comment>
<comment type="function">
    <text evidence="1">This protein is part of the stalk that links CF(0) to CF(1). It either transmits conformational changes from CF(0) to CF(1) or is implicated in proton conduction.</text>
</comment>
<comment type="subunit">
    <text evidence="1">F-type ATPases have 2 components, F(1) - the catalytic core - and F(0) - the membrane proton channel. F(1) has five subunits: alpha(3), beta(3), gamma(1), delta(1), epsilon(1). F(0) has three main subunits: a(1), b(2) and c(10-14). The alpha and beta chains form an alternating ring which encloses part of the gamma chain. F(1) is attached to F(0) by a central stalk formed by the gamma and epsilon chains, while a peripheral stalk is formed by the delta and b chains.</text>
</comment>
<comment type="subcellular location">
    <subcellularLocation>
        <location evidence="1">Cell inner membrane</location>
        <topology evidence="1">Peripheral membrane protein</topology>
    </subcellularLocation>
</comment>
<comment type="similarity">
    <text evidence="1">Belongs to the ATPase delta chain family.</text>
</comment>
<protein>
    <recommendedName>
        <fullName evidence="1">ATP synthase subunit delta</fullName>
    </recommendedName>
    <alternativeName>
        <fullName evidence="1">ATP synthase F(1) sector subunit delta</fullName>
    </alternativeName>
    <alternativeName>
        <fullName evidence="1">F-type ATPase subunit delta</fullName>
        <shortName evidence="1">F-ATPase subunit delta</shortName>
    </alternativeName>
</protein>
<reference key="1">
    <citation type="journal article" date="2009" name="BMC Microbiol.">
        <title>The genome sequence of Geobacter metallireducens: features of metabolism, physiology and regulation common and dissimilar to Geobacter sulfurreducens.</title>
        <authorList>
            <person name="Aklujkar M."/>
            <person name="Krushkal J."/>
            <person name="DiBartolo G."/>
            <person name="Lapidus A."/>
            <person name="Land M.L."/>
            <person name="Lovley D.R."/>
        </authorList>
    </citation>
    <scope>NUCLEOTIDE SEQUENCE [LARGE SCALE GENOMIC DNA]</scope>
    <source>
        <strain>ATCC 53774 / DSM 7210 / GS-15</strain>
    </source>
</reference>
<accession>Q39Q53</accession>
<evidence type="ECO:0000255" key="1">
    <source>
        <dbReference type="HAMAP-Rule" id="MF_01416"/>
    </source>
</evidence>
<dbReference type="EMBL" id="CP000148">
    <property type="protein sequence ID" value="ABB33621.1"/>
    <property type="molecule type" value="Genomic_DNA"/>
</dbReference>
<dbReference type="RefSeq" id="WP_004514216.1">
    <property type="nucleotide sequence ID" value="NC_007517.1"/>
</dbReference>
<dbReference type="SMR" id="Q39Q53"/>
<dbReference type="STRING" id="269799.Gmet_3409"/>
<dbReference type="KEGG" id="gme:Gmet_3409"/>
<dbReference type="eggNOG" id="COG0712">
    <property type="taxonomic scope" value="Bacteria"/>
</dbReference>
<dbReference type="HOGENOM" id="CLU_085114_1_1_7"/>
<dbReference type="Proteomes" id="UP000007073">
    <property type="component" value="Chromosome"/>
</dbReference>
<dbReference type="GO" id="GO:0005886">
    <property type="term" value="C:plasma membrane"/>
    <property type="evidence" value="ECO:0007669"/>
    <property type="project" value="UniProtKB-SubCell"/>
</dbReference>
<dbReference type="GO" id="GO:0045259">
    <property type="term" value="C:proton-transporting ATP synthase complex"/>
    <property type="evidence" value="ECO:0007669"/>
    <property type="project" value="UniProtKB-KW"/>
</dbReference>
<dbReference type="GO" id="GO:0046933">
    <property type="term" value="F:proton-transporting ATP synthase activity, rotational mechanism"/>
    <property type="evidence" value="ECO:0007669"/>
    <property type="project" value="UniProtKB-UniRule"/>
</dbReference>
<dbReference type="Gene3D" id="1.10.520.20">
    <property type="entry name" value="N-terminal domain of the delta subunit of the F1F0-ATP synthase"/>
    <property type="match status" value="1"/>
</dbReference>
<dbReference type="HAMAP" id="MF_01416">
    <property type="entry name" value="ATP_synth_delta_bact"/>
    <property type="match status" value="1"/>
</dbReference>
<dbReference type="InterPro" id="IPR026015">
    <property type="entry name" value="ATP_synth_OSCP/delta_N_sf"/>
</dbReference>
<dbReference type="InterPro" id="IPR000711">
    <property type="entry name" value="ATPase_OSCP/dsu"/>
</dbReference>
<dbReference type="NCBIfam" id="TIGR01145">
    <property type="entry name" value="ATP_synt_delta"/>
    <property type="match status" value="1"/>
</dbReference>
<dbReference type="NCBIfam" id="NF004402">
    <property type="entry name" value="PRK05758.2-2"/>
    <property type="match status" value="1"/>
</dbReference>
<dbReference type="PANTHER" id="PTHR11910">
    <property type="entry name" value="ATP SYNTHASE DELTA CHAIN"/>
    <property type="match status" value="1"/>
</dbReference>
<dbReference type="Pfam" id="PF00213">
    <property type="entry name" value="OSCP"/>
    <property type="match status" value="1"/>
</dbReference>
<dbReference type="PRINTS" id="PR00125">
    <property type="entry name" value="ATPASEDELTA"/>
</dbReference>
<dbReference type="SUPFAM" id="SSF47928">
    <property type="entry name" value="N-terminal domain of the delta subunit of the F1F0-ATP synthase"/>
    <property type="match status" value="1"/>
</dbReference>
<gene>
    <name evidence="1" type="primary">atpH</name>
    <name type="ordered locus">Gmet_3409</name>
</gene>
<proteinExistence type="inferred from homology"/>
<name>ATPD_GEOMG</name>
<feature type="chain" id="PRO_0000370986" description="ATP synthase subunit delta">
    <location>
        <begin position="1"/>
        <end position="180"/>
    </location>
</feature>